<feature type="chain" id="PRO_0000109455" description="tRNA-splicing endonuclease subunit Sen2">
    <location>
        <begin position="1"/>
        <end position="461"/>
    </location>
</feature>
<feature type="region of interest" description="Disordered" evidence="2">
    <location>
        <begin position="140"/>
        <end position="176"/>
    </location>
</feature>
<feature type="region of interest" description="Disordered" evidence="2">
    <location>
        <begin position="190"/>
        <end position="210"/>
    </location>
</feature>
<feature type="compositionally biased region" description="Polar residues" evidence="2">
    <location>
        <begin position="144"/>
        <end position="176"/>
    </location>
</feature>
<feature type="compositionally biased region" description="Basic and acidic residues" evidence="2">
    <location>
        <begin position="201"/>
        <end position="210"/>
    </location>
</feature>
<feature type="active site" evidence="1">
    <location>
        <position position="365"/>
    </location>
</feature>
<feature type="active site" evidence="1">
    <location>
        <position position="373"/>
    </location>
</feature>
<feature type="active site" evidence="1">
    <location>
        <position position="412"/>
    </location>
</feature>
<accession>Q5ZIN2</accession>
<protein>
    <recommendedName>
        <fullName>tRNA-splicing endonuclease subunit Sen2</fullName>
        <ecNumber>4.6.1.16</ecNumber>
    </recommendedName>
    <alternativeName>
        <fullName>tRNA-intron endonuclease Sen2</fullName>
    </alternativeName>
</protein>
<name>SEN2_CHICK</name>
<evidence type="ECO:0000250" key="1"/>
<evidence type="ECO:0000256" key="2">
    <source>
        <dbReference type="SAM" id="MobiDB-lite"/>
    </source>
</evidence>
<evidence type="ECO:0000305" key="3"/>
<sequence>MAEAAFHPPRRKRRVFECYQAPFPVGPGAGDFRMCRADMVNNCVVVRSPEDMDQLYNKGYFGKGILSRSRPVYSISDPSLVSKWQGANLNVPIITSKKYQQRVQWAKSALQEQGFDGCSVTKILENYTRPLEFPFLEKGGAEQTGDSCDTVCPNTENTELSGQSSTDTGNIATSSPECQKEVCQKAYAEGDPASDSMVGSKEQEPADVKETAQTSCQMHGSCMHCGCKAKGAPDRESCNMAKSRERAPEYVLVQEEEESSLCPEEGSAREQENFVKKEKLVCRRNPFRIFEYLQLSLEEAFFLVYALGCLTVYYGEEPLTILKLWEIFSEVKPSFKTTYMAYHYFRSKGWVPKVGLKYGTDLLLYRKGPPFYHASYSVIAELVDDNFEGSLRRPLSWMSLSGLNRTTVNASKELLLCYLIKPSDMTEEEMATPECLKRIKVQELIVTRWVSSRERSEQDDL</sequence>
<keyword id="KW-0456">Lyase</keyword>
<keyword id="KW-0507">mRNA processing</keyword>
<keyword id="KW-0539">Nucleus</keyword>
<keyword id="KW-1185">Reference proteome</keyword>
<keyword id="KW-0819">tRNA processing</keyword>
<comment type="function">
    <text evidence="1">Constitutes one of the two catalytic subunit of the tRNA-splicing endonuclease complex, a complex responsible for identification and cleavage of the splice sites in pre-tRNA. It cleaves pre-tRNA at the 5'- and 3'-splice sites to release the intron. The products are an intron and two tRNA half-molecules bearing 2',3'-cyclic phosphate and 5'-OH termini. There are no conserved sequences at the splice sites, but the intron is invariably located at the same site in the gene, placing the splice sites an invariant distance from the constant structural features of the tRNA body. Probably carries the active site for 5'-splice site cleavage. The tRNA splicing endonuclease is also involved in mRNA processing via its association with pre-mRNA 3'-end processing factors, establishing a link between pre-tRNA splicing and pre-mRNA 3'-end formation, suggesting that the endonuclease subunits function in multiple RNA-processing events (By similarity).</text>
</comment>
<comment type="catalytic activity">
    <reaction>
        <text>pretRNA = a 3'-half-tRNA molecule with a 5'-OH end + a 5'-half-tRNA molecule with a 2',3'-cyclic phosphate end + an intron with a 2',3'-cyclic phosphate and a 5'-hydroxyl terminus.</text>
        <dbReference type="EC" id="4.6.1.16"/>
    </reaction>
</comment>
<comment type="subunit">
    <text evidence="1">tRNA splicing endonuclease is a heterotetramer composed of SEN2, SEN15, SEN34/LENG5 and SEN54.</text>
</comment>
<comment type="subcellular location">
    <subcellularLocation>
        <location evidence="1">Nucleus</location>
    </subcellularLocation>
</comment>
<comment type="similarity">
    <text evidence="3">Belongs to the tRNA-intron endonuclease family.</text>
</comment>
<dbReference type="EC" id="4.6.1.16"/>
<dbReference type="EMBL" id="AJ720752">
    <property type="protein sequence ID" value="CAG32411.1"/>
    <property type="molecule type" value="mRNA"/>
</dbReference>
<dbReference type="RefSeq" id="NP_001025765.1">
    <property type="nucleotide sequence ID" value="NM_001030594.2"/>
</dbReference>
<dbReference type="SMR" id="Q5ZIN2"/>
<dbReference type="FunCoup" id="Q5ZIN2">
    <property type="interactions" value="503"/>
</dbReference>
<dbReference type="STRING" id="9031.ENSGALP00000073696"/>
<dbReference type="PaxDb" id="9031-ENSGALP00000007969"/>
<dbReference type="GeneID" id="415965"/>
<dbReference type="KEGG" id="gga:415965"/>
<dbReference type="CTD" id="80746"/>
<dbReference type="VEuPathDB" id="HostDB:geneid_415965"/>
<dbReference type="eggNOG" id="KOG4685">
    <property type="taxonomic scope" value="Eukaryota"/>
</dbReference>
<dbReference type="InParanoid" id="Q5ZIN2"/>
<dbReference type="OrthoDB" id="10249562at2759"/>
<dbReference type="PhylomeDB" id="Q5ZIN2"/>
<dbReference type="PRO" id="PR:Q5ZIN2"/>
<dbReference type="Proteomes" id="UP000000539">
    <property type="component" value="Unassembled WGS sequence"/>
</dbReference>
<dbReference type="GO" id="GO:0005737">
    <property type="term" value="C:cytoplasm"/>
    <property type="evidence" value="ECO:0000318"/>
    <property type="project" value="GO_Central"/>
</dbReference>
<dbReference type="GO" id="GO:0000214">
    <property type="term" value="C:tRNA-intron endonuclease complex"/>
    <property type="evidence" value="ECO:0000318"/>
    <property type="project" value="GO_Central"/>
</dbReference>
<dbReference type="GO" id="GO:0016829">
    <property type="term" value="F:lyase activity"/>
    <property type="evidence" value="ECO:0007669"/>
    <property type="project" value="UniProtKB-KW"/>
</dbReference>
<dbReference type="GO" id="GO:0003676">
    <property type="term" value="F:nucleic acid binding"/>
    <property type="evidence" value="ECO:0007669"/>
    <property type="project" value="InterPro"/>
</dbReference>
<dbReference type="GO" id="GO:0000213">
    <property type="term" value="F:tRNA-intron endonuclease activity"/>
    <property type="evidence" value="ECO:0000318"/>
    <property type="project" value="GO_Central"/>
</dbReference>
<dbReference type="GO" id="GO:0006397">
    <property type="term" value="P:mRNA processing"/>
    <property type="evidence" value="ECO:0007669"/>
    <property type="project" value="UniProtKB-KW"/>
</dbReference>
<dbReference type="GO" id="GO:0008033">
    <property type="term" value="P:tRNA processing"/>
    <property type="evidence" value="ECO:0000318"/>
    <property type="project" value="GO_Central"/>
</dbReference>
<dbReference type="GO" id="GO:0000379">
    <property type="term" value="P:tRNA-type intron splice site recognition and cleavage"/>
    <property type="evidence" value="ECO:0000318"/>
    <property type="project" value="GO_Central"/>
</dbReference>
<dbReference type="CDD" id="cd22363">
    <property type="entry name" value="tRNA-intron_lyase_C"/>
    <property type="match status" value="1"/>
</dbReference>
<dbReference type="FunFam" id="3.40.1350.10:FF:000001">
    <property type="entry name" value="tRNA-splicing endonuclease subunit Sen2"/>
    <property type="match status" value="1"/>
</dbReference>
<dbReference type="Gene3D" id="3.40.1350.10">
    <property type="match status" value="1"/>
</dbReference>
<dbReference type="InterPro" id="IPR011856">
    <property type="entry name" value="tRNA_endonuc-like_dom_sf"/>
</dbReference>
<dbReference type="InterPro" id="IPR036167">
    <property type="entry name" value="tRNA_intron_Endo_cat-like_sf"/>
</dbReference>
<dbReference type="InterPro" id="IPR006677">
    <property type="entry name" value="tRNA_intron_Endonuc_cat-like"/>
</dbReference>
<dbReference type="InterPro" id="IPR006678">
    <property type="entry name" value="tRNA_intron_Endonuc_N"/>
</dbReference>
<dbReference type="InterPro" id="IPR006676">
    <property type="entry name" value="tRNA_splic"/>
</dbReference>
<dbReference type="InterPro" id="IPR016589">
    <property type="entry name" value="tRNA_splic_SEN2"/>
</dbReference>
<dbReference type="PANTHER" id="PTHR21227">
    <property type="entry name" value="TRNA-SPLICING ENDONUCLEASE SUBUNIT SEN2"/>
    <property type="match status" value="1"/>
</dbReference>
<dbReference type="PANTHER" id="PTHR21227:SF0">
    <property type="entry name" value="TRNA-SPLICING ENDONUCLEASE SUBUNIT SEN2"/>
    <property type="match status" value="1"/>
</dbReference>
<dbReference type="Pfam" id="PF01974">
    <property type="entry name" value="tRNA_int_endo"/>
    <property type="match status" value="1"/>
</dbReference>
<dbReference type="Pfam" id="PF02778">
    <property type="entry name" value="tRNA_int_endo_N"/>
    <property type="match status" value="1"/>
</dbReference>
<dbReference type="PIRSF" id="PIRSF011789">
    <property type="entry name" value="tRNA_splic_SEN2"/>
    <property type="match status" value="1"/>
</dbReference>
<dbReference type="SUPFAM" id="SSF53032">
    <property type="entry name" value="tRNA-intron endonuclease catalytic domain-like"/>
    <property type="match status" value="1"/>
</dbReference>
<gene>
    <name type="primary">TSEN2</name>
    <name type="ORF">RCJMB04_24m3</name>
</gene>
<reference key="1">
    <citation type="journal article" date="2005" name="Genome Biol.">
        <title>Full-length cDNAs from chicken bursal lymphocytes to facilitate gene function analysis.</title>
        <authorList>
            <person name="Caldwell R.B."/>
            <person name="Kierzek A.M."/>
            <person name="Arakawa H."/>
            <person name="Bezzubov Y."/>
            <person name="Zaim J."/>
            <person name="Fiedler P."/>
            <person name="Kutter S."/>
            <person name="Blagodatski A."/>
            <person name="Kostovska D."/>
            <person name="Koter M."/>
            <person name="Plachy J."/>
            <person name="Carninci P."/>
            <person name="Hayashizaki Y."/>
            <person name="Buerstedde J.-M."/>
        </authorList>
    </citation>
    <scope>NUCLEOTIDE SEQUENCE [LARGE SCALE MRNA]</scope>
    <source>
        <strain>CB</strain>
        <tissue>Bursa of Fabricius</tissue>
    </source>
</reference>
<organism>
    <name type="scientific">Gallus gallus</name>
    <name type="common">Chicken</name>
    <dbReference type="NCBI Taxonomy" id="9031"/>
    <lineage>
        <taxon>Eukaryota</taxon>
        <taxon>Metazoa</taxon>
        <taxon>Chordata</taxon>
        <taxon>Craniata</taxon>
        <taxon>Vertebrata</taxon>
        <taxon>Euteleostomi</taxon>
        <taxon>Archelosauria</taxon>
        <taxon>Archosauria</taxon>
        <taxon>Dinosauria</taxon>
        <taxon>Saurischia</taxon>
        <taxon>Theropoda</taxon>
        <taxon>Coelurosauria</taxon>
        <taxon>Aves</taxon>
        <taxon>Neognathae</taxon>
        <taxon>Galloanserae</taxon>
        <taxon>Galliformes</taxon>
        <taxon>Phasianidae</taxon>
        <taxon>Phasianinae</taxon>
        <taxon>Gallus</taxon>
    </lineage>
</organism>
<proteinExistence type="evidence at transcript level"/>